<dbReference type="EC" id="4.2.1.8" evidence="1"/>
<dbReference type="EMBL" id="CP000918">
    <property type="protein sequence ID" value="ACO16732.1"/>
    <property type="molecule type" value="Genomic_DNA"/>
</dbReference>
<dbReference type="RefSeq" id="WP_000784062.1">
    <property type="nucleotide sequence ID" value="NC_012468.1"/>
</dbReference>
<dbReference type="SMR" id="C1CAV6"/>
<dbReference type="KEGG" id="snm:SP70585_2237"/>
<dbReference type="HOGENOM" id="CLU_058621_1_0_9"/>
<dbReference type="UniPathway" id="UPA00246"/>
<dbReference type="Proteomes" id="UP000002211">
    <property type="component" value="Chromosome"/>
</dbReference>
<dbReference type="GO" id="GO:0008198">
    <property type="term" value="F:ferrous iron binding"/>
    <property type="evidence" value="ECO:0007669"/>
    <property type="project" value="TreeGrafter"/>
</dbReference>
<dbReference type="GO" id="GO:0030145">
    <property type="term" value="F:manganese ion binding"/>
    <property type="evidence" value="ECO:0007669"/>
    <property type="project" value="TreeGrafter"/>
</dbReference>
<dbReference type="GO" id="GO:0008927">
    <property type="term" value="F:mannonate dehydratase activity"/>
    <property type="evidence" value="ECO:0007669"/>
    <property type="project" value="UniProtKB-UniRule"/>
</dbReference>
<dbReference type="GO" id="GO:0042840">
    <property type="term" value="P:D-glucuronate catabolic process"/>
    <property type="evidence" value="ECO:0007669"/>
    <property type="project" value="TreeGrafter"/>
</dbReference>
<dbReference type="FunFam" id="3.20.20.150:FF:000010">
    <property type="entry name" value="Mannonate dehydratase"/>
    <property type="match status" value="1"/>
</dbReference>
<dbReference type="Gene3D" id="3.20.20.150">
    <property type="entry name" value="Divalent-metal-dependent TIM barrel enzymes"/>
    <property type="match status" value="1"/>
</dbReference>
<dbReference type="HAMAP" id="MF_00106">
    <property type="entry name" value="UxuA"/>
    <property type="match status" value="1"/>
</dbReference>
<dbReference type="InterPro" id="IPR004628">
    <property type="entry name" value="Man_deHydtase"/>
</dbReference>
<dbReference type="InterPro" id="IPR036237">
    <property type="entry name" value="Xyl_isomerase-like_sf"/>
</dbReference>
<dbReference type="NCBIfam" id="NF003027">
    <property type="entry name" value="PRK03906.1"/>
    <property type="match status" value="2"/>
</dbReference>
<dbReference type="PANTHER" id="PTHR30387">
    <property type="entry name" value="MANNONATE DEHYDRATASE"/>
    <property type="match status" value="1"/>
</dbReference>
<dbReference type="PANTHER" id="PTHR30387:SF2">
    <property type="entry name" value="MANNONATE DEHYDRATASE"/>
    <property type="match status" value="1"/>
</dbReference>
<dbReference type="Pfam" id="PF03786">
    <property type="entry name" value="UxuA"/>
    <property type="match status" value="1"/>
</dbReference>
<dbReference type="PIRSF" id="PIRSF016049">
    <property type="entry name" value="Man_dehyd"/>
    <property type="match status" value="1"/>
</dbReference>
<dbReference type="SUPFAM" id="SSF51658">
    <property type="entry name" value="Xylose isomerase-like"/>
    <property type="match status" value="1"/>
</dbReference>
<name>UXUA_STRP7</name>
<protein>
    <recommendedName>
        <fullName evidence="1">Mannonate dehydratase</fullName>
        <ecNumber evidence="1">4.2.1.8</ecNumber>
    </recommendedName>
    <alternativeName>
        <fullName evidence="1">D-mannonate hydro-lyase</fullName>
    </alternativeName>
</protein>
<gene>
    <name evidence="1" type="primary">uxuA</name>
    <name type="ordered locus">SP70585_2237</name>
</gene>
<accession>C1CAV6</accession>
<organism>
    <name type="scientific">Streptococcus pneumoniae (strain 70585)</name>
    <dbReference type="NCBI Taxonomy" id="488221"/>
    <lineage>
        <taxon>Bacteria</taxon>
        <taxon>Bacillati</taxon>
        <taxon>Bacillota</taxon>
        <taxon>Bacilli</taxon>
        <taxon>Lactobacillales</taxon>
        <taxon>Streptococcaceae</taxon>
        <taxon>Streptococcus</taxon>
    </lineage>
</organism>
<proteinExistence type="inferred from homology"/>
<reference key="1">
    <citation type="journal article" date="2010" name="Genome Biol.">
        <title>Structure and dynamics of the pan-genome of Streptococcus pneumoniae and closely related species.</title>
        <authorList>
            <person name="Donati C."/>
            <person name="Hiller N.L."/>
            <person name="Tettelin H."/>
            <person name="Muzzi A."/>
            <person name="Croucher N.J."/>
            <person name="Angiuoli S.V."/>
            <person name="Oggioni M."/>
            <person name="Dunning Hotopp J.C."/>
            <person name="Hu F.Z."/>
            <person name="Riley D.R."/>
            <person name="Covacci A."/>
            <person name="Mitchell T.J."/>
            <person name="Bentley S.D."/>
            <person name="Kilian M."/>
            <person name="Ehrlich G.D."/>
            <person name="Rappuoli R."/>
            <person name="Moxon E.R."/>
            <person name="Masignani V."/>
        </authorList>
    </citation>
    <scope>NUCLEOTIDE SEQUENCE [LARGE SCALE GENOMIC DNA]</scope>
    <source>
        <strain>70585</strain>
    </source>
</reference>
<comment type="function">
    <text evidence="1">Catalyzes the dehydration of D-mannonate.</text>
</comment>
<comment type="catalytic activity">
    <reaction evidence="1">
        <text>D-mannonate = 2-dehydro-3-deoxy-D-gluconate + H2O</text>
        <dbReference type="Rhea" id="RHEA:20097"/>
        <dbReference type="ChEBI" id="CHEBI:15377"/>
        <dbReference type="ChEBI" id="CHEBI:17767"/>
        <dbReference type="ChEBI" id="CHEBI:57990"/>
        <dbReference type="EC" id="4.2.1.8"/>
    </reaction>
</comment>
<comment type="cofactor">
    <cofactor evidence="1">
        <name>Fe(2+)</name>
        <dbReference type="ChEBI" id="CHEBI:29033"/>
    </cofactor>
    <cofactor evidence="1">
        <name>Mn(2+)</name>
        <dbReference type="ChEBI" id="CHEBI:29035"/>
    </cofactor>
</comment>
<comment type="pathway">
    <text evidence="1">Carbohydrate metabolism; pentose and glucuronate interconversion.</text>
</comment>
<comment type="similarity">
    <text evidence="1">Belongs to the mannonate dehydratase family.</text>
</comment>
<evidence type="ECO:0000255" key="1">
    <source>
        <dbReference type="HAMAP-Rule" id="MF_00106"/>
    </source>
</evidence>
<feature type="chain" id="PRO_1000197934" description="Mannonate dehydratase">
    <location>
        <begin position="1"/>
        <end position="366"/>
    </location>
</feature>
<keyword id="KW-0408">Iron</keyword>
<keyword id="KW-0456">Lyase</keyword>
<keyword id="KW-0464">Manganese</keyword>
<sequence length="366" mass="40940">MKMSFRWYGKKDPVTLEEIKAIPGMQGIVTAVYDVPVGQAWPLENILELKQMVEEAGLEITVIESIPVHEDIKQGKPNRDELIENYKTSIRNVGAAGIPVVCYNFMPVFDWTRSDLHHPLPDGSTSLAFLKSDLAGVDPVADDLNLPGWDSSYSKEEMKNVIENYRQNISEEDLWANLEYFIKAIMPTAEEAGVKMAIHPDDPPYGIFGLPRIITGQEAVERFLNLYDSEHNGITMCVGSYASDPKNDVLAMTEYALKRNRINFMHTRNVTAGAWGFQETAHLSQSGDIDMNGVVKLLVDYDWQGALRPDHGRRIWGDQTKTPGYGLYDRALGATYFNGLYEANMRAAGKTPDFGIKVKTVGNKEG</sequence>